<keyword id="KW-0012">Acyltransferase</keyword>
<keyword id="KW-0133">Cell shape</keyword>
<keyword id="KW-0961">Cell wall biogenesis/degradation</keyword>
<keyword id="KW-0963">Cytoplasm</keyword>
<keyword id="KW-0460">Magnesium</keyword>
<keyword id="KW-0479">Metal-binding</keyword>
<keyword id="KW-0511">Multifunctional enzyme</keyword>
<keyword id="KW-0548">Nucleotidyltransferase</keyword>
<keyword id="KW-0573">Peptidoglycan synthesis</keyword>
<keyword id="KW-0677">Repeat</keyword>
<keyword id="KW-0808">Transferase</keyword>
<dbReference type="EC" id="2.7.7.23" evidence="1"/>
<dbReference type="EC" id="2.3.1.157" evidence="1"/>
<dbReference type="EMBL" id="CP001056">
    <property type="protein sequence ID" value="ACD22657.1"/>
    <property type="molecule type" value="Genomic_DNA"/>
</dbReference>
<dbReference type="SMR" id="B2TI07"/>
<dbReference type="KEGG" id="cbk:CLL_A0148"/>
<dbReference type="PATRIC" id="fig|935198.13.peg.138"/>
<dbReference type="HOGENOM" id="CLU_029499_15_2_9"/>
<dbReference type="UniPathway" id="UPA00113">
    <property type="reaction ID" value="UER00532"/>
</dbReference>
<dbReference type="UniPathway" id="UPA00113">
    <property type="reaction ID" value="UER00533"/>
</dbReference>
<dbReference type="UniPathway" id="UPA00973"/>
<dbReference type="Proteomes" id="UP000001195">
    <property type="component" value="Chromosome"/>
</dbReference>
<dbReference type="GO" id="GO:0005737">
    <property type="term" value="C:cytoplasm"/>
    <property type="evidence" value="ECO:0007669"/>
    <property type="project" value="UniProtKB-SubCell"/>
</dbReference>
<dbReference type="GO" id="GO:0016020">
    <property type="term" value="C:membrane"/>
    <property type="evidence" value="ECO:0007669"/>
    <property type="project" value="GOC"/>
</dbReference>
<dbReference type="GO" id="GO:0019134">
    <property type="term" value="F:glucosamine-1-phosphate N-acetyltransferase activity"/>
    <property type="evidence" value="ECO:0007669"/>
    <property type="project" value="UniProtKB-UniRule"/>
</dbReference>
<dbReference type="GO" id="GO:0000287">
    <property type="term" value="F:magnesium ion binding"/>
    <property type="evidence" value="ECO:0007669"/>
    <property type="project" value="UniProtKB-UniRule"/>
</dbReference>
<dbReference type="GO" id="GO:0003977">
    <property type="term" value="F:UDP-N-acetylglucosamine diphosphorylase activity"/>
    <property type="evidence" value="ECO:0007669"/>
    <property type="project" value="UniProtKB-UniRule"/>
</dbReference>
<dbReference type="GO" id="GO:0000902">
    <property type="term" value="P:cell morphogenesis"/>
    <property type="evidence" value="ECO:0007669"/>
    <property type="project" value="UniProtKB-UniRule"/>
</dbReference>
<dbReference type="GO" id="GO:0071555">
    <property type="term" value="P:cell wall organization"/>
    <property type="evidence" value="ECO:0007669"/>
    <property type="project" value="UniProtKB-KW"/>
</dbReference>
<dbReference type="GO" id="GO:0009245">
    <property type="term" value="P:lipid A biosynthetic process"/>
    <property type="evidence" value="ECO:0007669"/>
    <property type="project" value="UniProtKB-UniRule"/>
</dbReference>
<dbReference type="GO" id="GO:0009252">
    <property type="term" value="P:peptidoglycan biosynthetic process"/>
    <property type="evidence" value="ECO:0007669"/>
    <property type="project" value="UniProtKB-UniRule"/>
</dbReference>
<dbReference type="GO" id="GO:0008360">
    <property type="term" value="P:regulation of cell shape"/>
    <property type="evidence" value="ECO:0007669"/>
    <property type="project" value="UniProtKB-KW"/>
</dbReference>
<dbReference type="GO" id="GO:0006048">
    <property type="term" value="P:UDP-N-acetylglucosamine biosynthetic process"/>
    <property type="evidence" value="ECO:0007669"/>
    <property type="project" value="UniProtKB-UniPathway"/>
</dbReference>
<dbReference type="CDD" id="cd02540">
    <property type="entry name" value="GT2_GlmU_N_bac"/>
    <property type="match status" value="1"/>
</dbReference>
<dbReference type="CDD" id="cd03353">
    <property type="entry name" value="LbH_GlmU_C"/>
    <property type="match status" value="1"/>
</dbReference>
<dbReference type="Gene3D" id="2.160.10.10">
    <property type="entry name" value="Hexapeptide repeat proteins"/>
    <property type="match status" value="1"/>
</dbReference>
<dbReference type="Gene3D" id="3.90.550.10">
    <property type="entry name" value="Spore Coat Polysaccharide Biosynthesis Protein SpsA, Chain A"/>
    <property type="match status" value="1"/>
</dbReference>
<dbReference type="HAMAP" id="MF_01631">
    <property type="entry name" value="GlmU"/>
    <property type="match status" value="1"/>
</dbReference>
<dbReference type="InterPro" id="IPR005882">
    <property type="entry name" value="Bifunctional_GlmU"/>
</dbReference>
<dbReference type="InterPro" id="IPR050065">
    <property type="entry name" value="GlmU-like"/>
</dbReference>
<dbReference type="InterPro" id="IPR038009">
    <property type="entry name" value="GlmU_C_LbH"/>
</dbReference>
<dbReference type="InterPro" id="IPR001451">
    <property type="entry name" value="Hexapep"/>
</dbReference>
<dbReference type="InterPro" id="IPR018357">
    <property type="entry name" value="Hexapep_transf_CS"/>
</dbReference>
<dbReference type="InterPro" id="IPR005835">
    <property type="entry name" value="NTP_transferase_dom"/>
</dbReference>
<dbReference type="InterPro" id="IPR029044">
    <property type="entry name" value="Nucleotide-diphossugar_trans"/>
</dbReference>
<dbReference type="InterPro" id="IPR011004">
    <property type="entry name" value="Trimer_LpxA-like_sf"/>
</dbReference>
<dbReference type="NCBIfam" id="TIGR01173">
    <property type="entry name" value="glmU"/>
    <property type="match status" value="1"/>
</dbReference>
<dbReference type="NCBIfam" id="NF010934">
    <property type="entry name" value="PRK14354.1"/>
    <property type="match status" value="1"/>
</dbReference>
<dbReference type="PANTHER" id="PTHR43584:SF3">
    <property type="entry name" value="BIFUNCTIONAL PROTEIN GLMU"/>
    <property type="match status" value="1"/>
</dbReference>
<dbReference type="PANTHER" id="PTHR43584">
    <property type="entry name" value="NUCLEOTIDYL TRANSFERASE"/>
    <property type="match status" value="1"/>
</dbReference>
<dbReference type="Pfam" id="PF00132">
    <property type="entry name" value="Hexapep"/>
    <property type="match status" value="3"/>
</dbReference>
<dbReference type="Pfam" id="PF00483">
    <property type="entry name" value="NTP_transferase"/>
    <property type="match status" value="1"/>
</dbReference>
<dbReference type="SUPFAM" id="SSF53448">
    <property type="entry name" value="Nucleotide-diphospho-sugar transferases"/>
    <property type="match status" value="1"/>
</dbReference>
<dbReference type="SUPFAM" id="SSF51161">
    <property type="entry name" value="Trimeric LpxA-like enzymes"/>
    <property type="match status" value="1"/>
</dbReference>
<dbReference type="PROSITE" id="PS00101">
    <property type="entry name" value="HEXAPEP_TRANSFERASES"/>
    <property type="match status" value="1"/>
</dbReference>
<name>GLMU_CLOBB</name>
<evidence type="ECO:0000255" key="1">
    <source>
        <dbReference type="HAMAP-Rule" id="MF_01631"/>
    </source>
</evidence>
<accession>B2TI07</accession>
<reference key="1">
    <citation type="submission" date="2008-04" db="EMBL/GenBank/DDBJ databases">
        <title>Complete sequence of Clostridium botulinum strain Eklund.</title>
        <authorList>
            <person name="Brinkac L.M."/>
            <person name="Brown J.L."/>
            <person name="Bruce D."/>
            <person name="Detter C."/>
            <person name="Munk C."/>
            <person name="Smith L.A."/>
            <person name="Smith T.J."/>
            <person name="Sutton G."/>
            <person name="Brettin T.S."/>
        </authorList>
    </citation>
    <scope>NUCLEOTIDE SEQUENCE [LARGE SCALE GENOMIC DNA]</scope>
    <source>
        <strain>Eklund 17B / Type B</strain>
    </source>
</reference>
<sequence>MYKCALVLAAGQGKRIKSDLPKVLHKVCGKEMVNHVIDTIRKAGIQDANIIIGKGAELVKERTEEKKVTYSLQSEQLGTGHAVQCASEFLKGKKGTVAVFAGDTPLIKESTIKNLFNTHIEAKNAATILTAIVDDPTGYGRIIRSGNEVLKIVEHKDCNEEELKVNEMNSAIYCFDIKLLYESLSKLSNNNEQGEYYLTDVIEILKSAGHNIGAVVTDFEETIGVNSRAQLAQAEEILKDRINLKHMENGVTLIDPKTTYIGIDVEIGKDTIIYPNNIFEGNTIIGERCTIYQNSRIKDSIIKDEVDIQSSVILDSSIGNNTTVGPFAYIRPESKIGEKARIGDFVEIKKSIIGDGTKVSHLTYIGDAEVGKECNFGCGTVVVNYDGKKKYKTIIGNHSFIGCNTNLVSPVQVGDNTYIAAGSTITSEVQEGDLAVARAKQRNIKGWVDKKGLKK</sequence>
<feature type="chain" id="PRO_1000186425" description="Bifunctional protein GlmU">
    <location>
        <begin position="1"/>
        <end position="455"/>
    </location>
</feature>
<feature type="region of interest" description="Pyrophosphorylase" evidence="1">
    <location>
        <begin position="1"/>
        <end position="228"/>
    </location>
</feature>
<feature type="region of interest" description="Linker" evidence="1">
    <location>
        <begin position="229"/>
        <end position="249"/>
    </location>
</feature>
<feature type="region of interest" description="N-acetyltransferase" evidence="1">
    <location>
        <begin position="250"/>
        <end position="455"/>
    </location>
</feature>
<feature type="active site" description="Proton acceptor" evidence="1">
    <location>
        <position position="361"/>
    </location>
</feature>
<feature type="binding site" evidence="1">
    <location>
        <begin position="8"/>
        <end position="11"/>
    </location>
    <ligand>
        <name>UDP-N-acetyl-alpha-D-glucosamine</name>
        <dbReference type="ChEBI" id="CHEBI:57705"/>
    </ligand>
</feature>
<feature type="binding site" evidence="1">
    <location>
        <position position="22"/>
    </location>
    <ligand>
        <name>UDP-N-acetyl-alpha-D-glucosamine</name>
        <dbReference type="ChEBI" id="CHEBI:57705"/>
    </ligand>
</feature>
<feature type="binding site" evidence="1">
    <location>
        <position position="73"/>
    </location>
    <ligand>
        <name>UDP-N-acetyl-alpha-D-glucosamine</name>
        <dbReference type="ChEBI" id="CHEBI:57705"/>
    </ligand>
</feature>
<feature type="binding site" evidence="1">
    <location>
        <begin position="78"/>
        <end position="79"/>
    </location>
    <ligand>
        <name>UDP-N-acetyl-alpha-D-glucosamine</name>
        <dbReference type="ChEBI" id="CHEBI:57705"/>
    </ligand>
</feature>
<feature type="binding site" evidence="1">
    <location>
        <position position="103"/>
    </location>
    <ligand>
        <name>Mg(2+)</name>
        <dbReference type="ChEBI" id="CHEBI:18420"/>
    </ligand>
</feature>
<feature type="binding site" evidence="1">
    <location>
        <position position="140"/>
    </location>
    <ligand>
        <name>UDP-N-acetyl-alpha-D-glucosamine</name>
        <dbReference type="ChEBI" id="CHEBI:57705"/>
    </ligand>
</feature>
<feature type="binding site" evidence="1">
    <location>
        <position position="154"/>
    </location>
    <ligand>
        <name>UDP-N-acetyl-alpha-D-glucosamine</name>
        <dbReference type="ChEBI" id="CHEBI:57705"/>
    </ligand>
</feature>
<feature type="binding site" evidence="1">
    <location>
        <position position="169"/>
    </location>
    <ligand>
        <name>UDP-N-acetyl-alpha-D-glucosamine</name>
        <dbReference type="ChEBI" id="CHEBI:57705"/>
    </ligand>
</feature>
<feature type="binding site" evidence="1">
    <location>
        <position position="226"/>
    </location>
    <ligand>
        <name>Mg(2+)</name>
        <dbReference type="ChEBI" id="CHEBI:18420"/>
    </ligand>
</feature>
<feature type="binding site" evidence="1">
    <location>
        <position position="226"/>
    </location>
    <ligand>
        <name>UDP-N-acetyl-alpha-D-glucosamine</name>
        <dbReference type="ChEBI" id="CHEBI:57705"/>
    </ligand>
</feature>
<feature type="binding site" evidence="1">
    <location>
        <position position="331"/>
    </location>
    <ligand>
        <name>UDP-N-acetyl-alpha-D-glucosamine</name>
        <dbReference type="ChEBI" id="CHEBI:57705"/>
    </ligand>
</feature>
<feature type="binding site" evidence="1">
    <location>
        <position position="349"/>
    </location>
    <ligand>
        <name>UDP-N-acetyl-alpha-D-glucosamine</name>
        <dbReference type="ChEBI" id="CHEBI:57705"/>
    </ligand>
</feature>
<feature type="binding site" evidence="1">
    <location>
        <position position="364"/>
    </location>
    <ligand>
        <name>UDP-N-acetyl-alpha-D-glucosamine</name>
        <dbReference type="ChEBI" id="CHEBI:57705"/>
    </ligand>
</feature>
<feature type="binding site" evidence="1">
    <location>
        <position position="375"/>
    </location>
    <ligand>
        <name>UDP-N-acetyl-alpha-D-glucosamine</name>
        <dbReference type="ChEBI" id="CHEBI:57705"/>
    </ligand>
</feature>
<feature type="binding site" evidence="1">
    <location>
        <begin position="384"/>
        <end position="385"/>
    </location>
    <ligand>
        <name>acetyl-CoA</name>
        <dbReference type="ChEBI" id="CHEBI:57288"/>
    </ligand>
</feature>
<feature type="binding site" evidence="1">
    <location>
        <position position="421"/>
    </location>
    <ligand>
        <name>acetyl-CoA</name>
        <dbReference type="ChEBI" id="CHEBI:57288"/>
    </ligand>
</feature>
<feature type="binding site" evidence="1">
    <location>
        <position position="438"/>
    </location>
    <ligand>
        <name>acetyl-CoA</name>
        <dbReference type="ChEBI" id="CHEBI:57288"/>
    </ligand>
</feature>
<gene>
    <name evidence="1" type="primary">glmU</name>
    <name type="ordered locus">CLL_A0148</name>
</gene>
<comment type="function">
    <text evidence="1">Catalyzes the last two sequential reactions in the de novo biosynthetic pathway for UDP-N-acetylglucosamine (UDP-GlcNAc). The C-terminal domain catalyzes the transfer of acetyl group from acetyl coenzyme A to glucosamine-1-phosphate (GlcN-1-P) to produce N-acetylglucosamine-1-phosphate (GlcNAc-1-P), which is converted into UDP-GlcNAc by the transfer of uridine 5-monophosphate (from uridine 5-triphosphate), a reaction catalyzed by the N-terminal domain.</text>
</comment>
<comment type="catalytic activity">
    <reaction evidence="1">
        <text>alpha-D-glucosamine 1-phosphate + acetyl-CoA = N-acetyl-alpha-D-glucosamine 1-phosphate + CoA + H(+)</text>
        <dbReference type="Rhea" id="RHEA:13725"/>
        <dbReference type="ChEBI" id="CHEBI:15378"/>
        <dbReference type="ChEBI" id="CHEBI:57287"/>
        <dbReference type="ChEBI" id="CHEBI:57288"/>
        <dbReference type="ChEBI" id="CHEBI:57776"/>
        <dbReference type="ChEBI" id="CHEBI:58516"/>
        <dbReference type="EC" id="2.3.1.157"/>
    </reaction>
</comment>
<comment type="catalytic activity">
    <reaction evidence="1">
        <text>N-acetyl-alpha-D-glucosamine 1-phosphate + UTP + H(+) = UDP-N-acetyl-alpha-D-glucosamine + diphosphate</text>
        <dbReference type="Rhea" id="RHEA:13509"/>
        <dbReference type="ChEBI" id="CHEBI:15378"/>
        <dbReference type="ChEBI" id="CHEBI:33019"/>
        <dbReference type="ChEBI" id="CHEBI:46398"/>
        <dbReference type="ChEBI" id="CHEBI:57705"/>
        <dbReference type="ChEBI" id="CHEBI:57776"/>
        <dbReference type="EC" id="2.7.7.23"/>
    </reaction>
</comment>
<comment type="cofactor">
    <cofactor evidence="1">
        <name>Mg(2+)</name>
        <dbReference type="ChEBI" id="CHEBI:18420"/>
    </cofactor>
    <text evidence="1">Binds 1 Mg(2+) ion per subunit.</text>
</comment>
<comment type="pathway">
    <text evidence="1">Nucleotide-sugar biosynthesis; UDP-N-acetyl-alpha-D-glucosamine biosynthesis; N-acetyl-alpha-D-glucosamine 1-phosphate from alpha-D-glucosamine 6-phosphate (route II): step 2/2.</text>
</comment>
<comment type="pathway">
    <text evidence="1">Nucleotide-sugar biosynthesis; UDP-N-acetyl-alpha-D-glucosamine biosynthesis; UDP-N-acetyl-alpha-D-glucosamine from N-acetyl-alpha-D-glucosamine 1-phosphate: step 1/1.</text>
</comment>
<comment type="pathway">
    <text evidence="1">Bacterial outer membrane biogenesis; LPS lipid A biosynthesis.</text>
</comment>
<comment type="subunit">
    <text evidence="1">Homotrimer.</text>
</comment>
<comment type="subcellular location">
    <subcellularLocation>
        <location evidence="1">Cytoplasm</location>
    </subcellularLocation>
</comment>
<comment type="similarity">
    <text evidence="1">In the N-terminal section; belongs to the N-acetylglucosamine-1-phosphate uridyltransferase family.</text>
</comment>
<comment type="similarity">
    <text evidence="1">In the C-terminal section; belongs to the transferase hexapeptide repeat family.</text>
</comment>
<protein>
    <recommendedName>
        <fullName evidence="1">Bifunctional protein GlmU</fullName>
    </recommendedName>
    <domain>
        <recommendedName>
            <fullName evidence="1">UDP-N-acetylglucosamine pyrophosphorylase</fullName>
            <ecNumber evidence="1">2.7.7.23</ecNumber>
        </recommendedName>
        <alternativeName>
            <fullName evidence="1">N-acetylglucosamine-1-phosphate uridyltransferase</fullName>
        </alternativeName>
    </domain>
    <domain>
        <recommendedName>
            <fullName evidence="1">Glucosamine-1-phosphate N-acetyltransferase</fullName>
            <ecNumber evidence="1">2.3.1.157</ecNumber>
        </recommendedName>
    </domain>
</protein>
<organism>
    <name type="scientific">Clostridium botulinum (strain Eklund 17B / Type B)</name>
    <dbReference type="NCBI Taxonomy" id="935198"/>
    <lineage>
        <taxon>Bacteria</taxon>
        <taxon>Bacillati</taxon>
        <taxon>Bacillota</taxon>
        <taxon>Clostridia</taxon>
        <taxon>Eubacteriales</taxon>
        <taxon>Clostridiaceae</taxon>
        <taxon>Clostridium</taxon>
    </lineage>
</organism>
<proteinExistence type="inferred from homology"/>